<comment type="function">
    <text evidence="1">Negative regulator of scrB expression.</text>
</comment>
<keyword id="KW-0238">DNA-binding</keyword>
<keyword id="KW-0678">Repressor</keyword>
<keyword id="KW-0804">Transcription</keyword>
<keyword id="KW-0805">Transcription regulation</keyword>
<name>SCRR_PEDPE</name>
<proteinExistence type="inferred from homology"/>
<sequence>MKPKLNDVAKLAGVSATTVSRVINNHGYLSSQTKEKVFAAMRELHYQPNNMARSLQGKNTRLIGVIFSDISNPFFGELVSRIEKILFAKNYKVILCNSADDPQKERDYLQMLMANQVDGIIAGAHNLGIEEYQQYGLPIISFDRYLSDNIPIVSSDNYQGGWLATQTLHQAGATNVAIFTGKSHAGSPTNGRREGYEAYLTAQQLTPHVHELPFELTPALKMMEIKTIMTQHQYDGIFCSDDLAALLVLNVAQQLSLTVPEQLRVVGYDGTALIRDYHSELTTVEQPLADISTLLVSLLLQRIEDANCTLESKYTLPVKLIKGFTA</sequence>
<gene>
    <name type="primary">scrR</name>
</gene>
<dbReference type="EMBL" id="Z32771">
    <property type="protein sequence ID" value="CAA83670.1"/>
    <property type="molecule type" value="Genomic_DNA"/>
</dbReference>
<dbReference type="EMBL" id="L32093">
    <property type="protein sequence ID" value="AAA25569.1"/>
    <property type="molecule type" value="Genomic_DNA"/>
</dbReference>
<dbReference type="PIR" id="S44259">
    <property type="entry name" value="S44259"/>
</dbReference>
<dbReference type="SMR" id="P43472"/>
<dbReference type="GO" id="GO:0003700">
    <property type="term" value="F:DNA-binding transcription factor activity"/>
    <property type="evidence" value="ECO:0007669"/>
    <property type="project" value="TreeGrafter"/>
</dbReference>
<dbReference type="GO" id="GO:0000976">
    <property type="term" value="F:transcription cis-regulatory region binding"/>
    <property type="evidence" value="ECO:0007669"/>
    <property type="project" value="TreeGrafter"/>
</dbReference>
<dbReference type="CDD" id="cd01392">
    <property type="entry name" value="HTH_LacI"/>
    <property type="match status" value="1"/>
</dbReference>
<dbReference type="CDD" id="cd06291">
    <property type="entry name" value="PBP1_Qymf-like"/>
    <property type="match status" value="1"/>
</dbReference>
<dbReference type="Gene3D" id="3.40.50.2300">
    <property type="match status" value="2"/>
</dbReference>
<dbReference type="Gene3D" id="1.10.260.40">
    <property type="entry name" value="lambda repressor-like DNA-binding domains"/>
    <property type="match status" value="1"/>
</dbReference>
<dbReference type="InterPro" id="IPR000843">
    <property type="entry name" value="HTH_LacI"/>
</dbReference>
<dbReference type="InterPro" id="IPR046335">
    <property type="entry name" value="LacI/GalR-like_sensor"/>
</dbReference>
<dbReference type="InterPro" id="IPR010982">
    <property type="entry name" value="Lambda_DNA-bd_dom_sf"/>
</dbReference>
<dbReference type="InterPro" id="IPR028082">
    <property type="entry name" value="Peripla_BP_I"/>
</dbReference>
<dbReference type="PANTHER" id="PTHR30146">
    <property type="entry name" value="LACI-RELATED TRANSCRIPTIONAL REPRESSOR"/>
    <property type="match status" value="1"/>
</dbReference>
<dbReference type="PANTHER" id="PTHR30146:SF95">
    <property type="entry name" value="RIBOSE OPERON REPRESSOR"/>
    <property type="match status" value="1"/>
</dbReference>
<dbReference type="Pfam" id="PF00356">
    <property type="entry name" value="LacI"/>
    <property type="match status" value="1"/>
</dbReference>
<dbReference type="Pfam" id="PF13377">
    <property type="entry name" value="Peripla_BP_3"/>
    <property type="match status" value="1"/>
</dbReference>
<dbReference type="PRINTS" id="PR00036">
    <property type="entry name" value="HTHLACI"/>
</dbReference>
<dbReference type="SMART" id="SM00354">
    <property type="entry name" value="HTH_LACI"/>
    <property type="match status" value="1"/>
</dbReference>
<dbReference type="SUPFAM" id="SSF47413">
    <property type="entry name" value="lambda repressor-like DNA-binding domains"/>
    <property type="match status" value="1"/>
</dbReference>
<dbReference type="SUPFAM" id="SSF53822">
    <property type="entry name" value="Periplasmic binding protein-like I"/>
    <property type="match status" value="1"/>
</dbReference>
<dbReference type="PROSITE" id="PS00356">
    <property type="entry name" value="HTH_LACI_1"/>
    <property type="match status" value="1"/>
</dbReference>
<dbReference type="PROSITE" id="PS50932">
    <property type="entry name" value="HTH_LACI_2"/>
    <property type="match status" value="1"/>
</dbReference>
<evidence type="ECO:0000250" key="1"/>
<evidence type="ECO:0000255" key="2">
    <source>
        <dbReference type="PROSITE-ProRule" id="PRU00111"/>
    </source>
</evidence>
<protein>
    <recommendedName>
        <fullName>Sucrose operon repressor</fullName>
    </recommendedName>
    <alternativeName>
        <fullName>Scr operon regulatory protein</fullName>
    </alternativeName>
</protein>
<organism>
    <name type="scientific">Pediococcus pentosaceus</name>
    <dbReference type="NCBI Taxonomy" id="1255"/>
    <lineage>
        <taxon>Bacteria</taxon>
        <taxon>Bacillati</taxon>
        <taxon>Bacillota</taxon>
        <taxon>Bacilli</taxon>
        <taxon>Lactobacillales</taxon>
        <taxon>Lactobacillaceae</taxon>
        <taxon>Pediococcus</taxon>
    </lineage>
</organism>
<feature type="chain" id="PRO_0000108001" description="Sucrose operon repressor">
    <location>
        <begin position="1"/>
        <end position="326"/>
    </location>
</feature>
<feature type="domain" description="HTH lacI-type" evidence="2">
    <location>
        <begin position="1"/>
        <end position="57"/>
    </location>
</feature>
<feature type="DNA-binding region" description="H-T-H motif" evidence="2">
    <location>
        <begin position="5"/>
        <end position="24"/>
    </location>
</feature>
<accession>P43472</accession>
<reference key="1">
    <citation type="submission" date="1994-04" db="EMBL/GenBank/DDBJ databases">
        <title>The sucrose and raffinose operons of Pediococcus pentosaceus PPE1.0.</title>
        <authorList>
            <person name="Leenhouts K.K.J."/>
            <person name="Bolhuis A.A."/>
            <person name="Kok J.J."/>
            <person name="Venema G.G."/>
        </authorList>
    </citation>
    <scope>NUCLEOTIDE SEQUENCE [GENOMIC DNA]</scope>
    <source>
        <strain>PPE1.0</strain>
    </source>
</reference>